<name>RRF_THERP</name>
<protein>
    <recommendedName>
        <fullName evidence="1">Ribosome-recycling factor</fullName>
        <shortName evidence="1">RRF</shortName>
    </recommendedName>
    <alternativeName>
        <fullName evidence="1">Ribosome-releasing factor</fullName>
    </alternativeName>
</protein>
<gene>
    <name evidence="1" type="primary">frr</name>
    <name type="ordered locus">trd_1001</name>
</gene>
<sequence length="185" mass="21240">MIDEILRDAEQRMKKSIELLRQELAGIRAGRAAPSLLEHLEVNYYGTPTPLNQLATISAPEARLLVVQVWDRNAVSAVEKAIRQSELGLNPSVDGQTLRIQLPPLTEERRRQLVKLVHEEVEETKVAIRNIRRDALADIKELLKNKEISEDDERRAEQRLQDLTNRYIAEADKLGKQKEHDILEI</sequence>
<accession>B9L003</accession>
<comment type="function">
    <text evidence="1">Responsible for the release of ribosomes from messenger RNA at the termination of protein biosynthesis. May increase the efficiency of translation by recycling ribosomes from one round of translation to another.</text>
</comment>
<comment type="subcellular location">
    <subcellularLocation>
        <location evidence="1">Cytoplasm</location>
    </subcellularLocation>
</comment>
<comment type="similarity">
    <text evidence="1">Belongs to the RRF family.</text>
</comment>
<feature type="chain" id="PRO_1000194961" description="Ribosome-recycling factor">
    <location>
        <begin position="1"/>
        <end position="185"/>
    </location>
</feature>
<organism>
    <name type="scientific">Thermomicrobium roseum (strain ATCC 27502 / DSM 5159 / P-2)</name>
    <dbReference type="NCBI Taxonomy" id="309801"/>
    <lineage>
        <taxon>Bacteria</taxon>
        <taxon>Pseudomonadati</taxon>
        <taxon>Thermomicrobiota</taxon>
        <taxon>Thermomicrobia</taxon>
        <taxon>Thermomicrobiales</taxon>
        <taxon>Thermomicrobiaceae</taxon>
        <taxon>Thermomicrobium</taxon>
    </lineage>
</organism>
<dbReference type="EMBL" id="CP001275">
    <property type="protein sequence ID" value="ACM04625.1"/>
    <property type="molecule type" value="Genomic_DNA"/>
</dbReference>
<dbReference type="RefSeq" id="WP_015921963.1">
    <property type="nucleotide sequence ID" value="NC_011959.1"/>
</dbReference>
<dbReference type="SMR" id="B9L003"/>
<dbReference type="STRING" id="309801.trd_1001"/>
<dbReference type="KEGG" id="tro:trd_1001"/>
<dbReference type="eggNOG" id="COG0233">
    <property type="taxonomic scope" value="Bacteria"/>
</dbReference>
<dbReference type="HOGENOM" id="CLU_073981_2_0_0"/>
<dbReference type="Proteomes" id="UP000000447">
    <property type="component" value="Chromosome"/>
</dbReference>
<dbReference type="GO" id="GO:0005737">
    <property type="term" value="C:cytoplasm"/>
    <property type="evidence" value="ECO:0007669"/>
    <property type="project" value="UniProtKB-SubCell"/>
</dbReference>
<dbReference type="GO" id="GO:0043023">
    <property type="term" value="F:ribosomal large subunit binding"/>
    <property type="evidence" value="ECO:0007669"/>
    <property type="project" value="TreeGrafter"/>
</dbReference>
<dbReference type="GO" id="GO:0006415">
    <property type="term" value="P:translational termination"/>
    <property type="evidence" value="ECO:0007669"/>
    <property type="project" value="UniProtKB-UniRule"/>
</dbReference>
<dbReference type="CDD" id="cd00520">
    <property type="entry name" value="RRF"/>
    <property type="match status" value="1"/>
</dbReference>
<dbReference type="FunFam" id="1.10.132.20:FF:000001">
    <property type="entry name" value="Ribosome-recycling factor"/>
    <property type="match status" value="1"/>
</dbReference>
<dbReference type="FunFam" id="3.30.1360.40:FF:000001">
    <property type="entry name" value="Ribosome-recycling factor"/>
    <property type="match status" value="1"/>
</dbReference>
<dbReference type="Gene3D" id="3.30.1360.40">
    <property type="match status" value="1"/>
</dbReference>
<dbReference type="Gene3D" id="1.10.132.20">
    <property type="entry name" value="Ribosome-recycling factor"/>
    <property type="match status" value="1"/>
</dbReference>
<dbReference type="HAMAP" id="MF_00040">
    <property type="entry name" value="RRF"/>
    <property type="match status" value="1"/>
</dbReference>
<dbReference type="InterPro" id="IPR002661">
    <property type="entry name" value="Ribosome_recyc_fac"/>
</dbReference>
<dbReference type="InterPro" id="IPR023584">
    <property type="entry name" value="Ribosome_recyc_fac_dom"/>
</dbReference>
<dbReference type="InterPro" id="IPR036191">
    <property type="entry name" value="RRF_sf"/>
</dbReference>
<dbReference type="NCBIfam" id="TIGR00496">
    <property type="entry name" value="frr"/>
    <property type="match status" value="1"/>
</dbReference>
<dbReference type="PANTHER" id="PTHR20982:SF3">
    <property type="entry name" value="MITOCHONDRIAL RIBOSOME RECYCLING FACTOR PSEUDO 1"/>
    <property type="match status" value="1"/>
</dbReference>
<dbReference type="PANTHER" id="PTHR20982">
    <property type="entry name" value="RIBOSOME RECYCLING FACTOR"/>
    <property type="match status" value="1"/>
</dbReference>
<dbReference type="Pfam" id="PF01765">
    <property type="entry name" value="RRF"/>
    <property type="match status" value="1"/>
</dbReference>
<dbReference type="SUPFAM" id="SSF55194">
    <property type="entry name" value="Ribosome recycling factor, RRF"/>
    <property type="match status" value="1"/>
</dbReference>
<evidence type="ECO:0000255" key="1">
    <source>
        <dbReference type="HAMAP-Rule" id="MF_00040"/>
    </source>
</evidence>
<proteinExistence type="inferred from homology"/>
<reference key="1">
    <citation type="journal article" date="2009" name="PLoS ONE">
        <title>Complete genome sequence of the aerobic CO-oxidizing thermophile Thermomicrobium roseum.</title>
        <authorList>
            <person name="Wu D."/>
            <person name="Raymond J."/>
            <person name="Wu M."/>
            <person name="Chatterji S."/>
            <person name="Ren Q."/>
            <person name="Graham J.E."/>
            <person name="Bryant D.A."/>
            <person name="Robb F."/>
            <person name="Colman A."/>
            <person name="Tallon L.J."/>
            <person name="Badger J.H."/>
            <person name="Madupu R."/>
            <person name="Ward N.L."/>
            <person name="Eisen J.A."/>
        </authorList>
    </citation>
    <scope>NUCLEOTIDE SEQUENCE [LARGE SCALE GENOMIC DNA]</scope>
    <source>
        <strain>ATCC 27502 / DSM 5159 / P-2</strain>
    </source>
</reference>
<keyword id="KW-0963">Cytoplasm</keyword>
<keyword id="KW-0648">Protein biosynthesis</keyword>
<keyword id="KW-1185">Reference proteome</keyword>